<comment type="function">
    <text evidence="2">Regulates G protein-coupled receptor signaling cascades. Inhibits signal transduction by increasing the GTPase activity of G protein alpha subunits, thereby driving them into their inactive GDP-bound form. Plays an important role in the phototransduction cascade by regulating the lifetime and effective concentration of activated transducin alpha. May regulate extra and intracellular mitogenic signals.</text>
</comment>
<comment type="subunit">
    <text evidence="1 2">Interacts with GNAI1 and GNAQ. Interacts with GNAI3, GNAI3 and GNAO1.</text>
</comment>
<comment type="subcellular location">
    <subcellularLocation>
        <location evidence="2">Membrane</location>
        <topology evidence="2">Lipid-anchor</topology>
    </subcellularLocation>
</comment>
<comment type="PTM">
    <text evidence="2">Palmitoylated on Cys-2 and/or Cys-12.</text>
</comment>
<comment type="PTM">
    <text evidence="1">Phosphorylated. Phosphorylation at Tyr-168 by EGFR enhances GTPase accelerating (GAP) activity toward GNAI1.</text>
</comment>
<sequence length="202" mass="22636">MCRTLAAFPTSCLERAKEFKTRLGIFLHKSELGSDTGSVGKFEWGSKHSKEGKNFSEDVLGWKESFDLLLSSKNGVAAFHAFLKTEFSEENLEFWLACEEFKKLRSATKLGSRAHRIFEEFICSEAPKEVNIDHETRELTRTNLQAATAVCFDAAQWKVRALMEKDSYPRFLKSPAYRDLATQATAASASPSSSSPAEPLHT</sequence>
<protein>
    <recommendedName>
        <fullName>Regulator of G-protein signaling 16</fullName>
        <shortName>RGS16</shortName>
    </recommendedName>
    <alternativeName>
        <fullName>Retinal-specific RGS</fullName>
        <shortName>RGS-r</shortName>
    </alternativeName>
    <alternativeName>
        <fullName>Retinally abundant regulator of G-protein signaling</fullName>
    </alternativeName>
</protein>
<organism>
    <name type="scientific">Bos taurus</name>
    <name type="common">Bovine</name>
    <dbReference type="NCBI Taxonomy" id="9913"/>
    <lineage>
        <taxon>Eukaryota</taxon>
        <taxon>Metazoa</taxon>
        <taxon>Chordata</taxon>
        <taxon>Craniata</taxon>
        <taxon>Vertebrata</taxon>
        <taxon>Euteleostomi</taxon>
        <taxon>Mammalia</taxon>
        <taxon>Eutheria</taxon>
        <taxon>Laurasiatheria</taxon>
        <taxon>Artiodactyla</taxon>
        <taxon>Ruminantia</taxon>
        <taxon>Pecora</taxon>
        <taxon>Bovidae</taxon>
        <taxon>Bovinae</taxon>
        <taxon>Bos</taxon>
    </lineage>
</organism>
<proteinExistence type="evidence at transcript level"/>
<dbReference type="EMBL" id="AF011361">
    <property type="protein sequence ID" value="AAC99484.1"/>
    <property type="molecule type" value="mRNA"/>
</dbReference>
<dbReference type="EMBL" id="BC123439">
    <property type="protein sequence ID" value="AAI23440.1"/>
    <property type="molecule type" value="mRNA"/>
</dbReference>
<dbReference type="RefSeq" id="NP_776875.1">
    <property type="nucleotide sequence ID" value="NM_174450.3"/>
</dbReference>
<dbReference type="SMR" id="O46471"/>
<dbReference type="FunCoup" id="O46471">
    <property type="interactions" value="73"/>
</dbReference>
<dbReference type="STRING" id="9913.ENSBTAP00000005642"/>
<dbReference type="PaxDb" id="9913-ENSBTAP00000005642"/>
<dbReference type="Ensembl" id="ENSBTAT00000005642.5">
    <property type="protein sequence ID" value="ENSBTAP00000005642.4"/>
    <property type="gene ID" value="ENSBTAG00000004305.5"/>
</dbReference>
<dbReference type="GeneID" id="282035"/>
<dbReference type="KEGG" id="bta:282035"/>
<dbReference type="CTD" id="6004"/>
<dbReference type="VEuPathDB" id="HostDB:ENSBTAG00000004305"/>
<dbReference type="VGNC" id="VGNC:33915">
    <property type="gene designation" value="RGS16"/>
</dbReference>
<dbReference type="eggNOG" id="KOG3589">
    <property type="taxonomic scope" value="Eukaryota"/>
</dbReference>
<dbReference type="GeneTree" id="ENSGT00940000154304"/>
<dbReference type="HOGENOM" id="CLU_059863_3_0_1"/>
<dbReference type="InParanoid" id="O46471"/>
<dbReference type="OMA" id="KTHTLME"/>
<dbReference type="OrthoDB" id="196547at2759"/>
<dbReference type="TreeFam" id="TF315837"/>
<dbReference type="Reactome" id="R-BTA-416476">
    <property type="pathway name" value="G alpha (q) signalling events"/>
</dbReference>
<dbReference type="Reactome" id="R-BTA-418594">
    <property type="pathway name" value="G alpha (i) signalling events"/>
</dbReference>
<dbReference type="Reactome" id="R-BTA-418597">
    <property type="pathway name" value="G alpha (z) signalling events"/>
</dbReference>
<dbReference type="Proteomes" id="UP000009136">
    <property type="component" value="Chromosome 16"/>
</dbReference>
<dbReference type="Bgee" id="ENSBTAG00000004305">
    <property type="expression patterns" value="Expressed in ureter and 98 other cell types or tissues"/>
</dbReference>
<dbReference type="GO" id="GO:0005737">
    <property type="term" value="C:cytoplasm"/>
    <property type="evidence" value="ECO:0007669"/>
    <property type="project" value="Ensembl"/>
</dbReference>
<dbReference type="GO" id="GO:0016020">
    <property type="term" value="C:membrane"/>
    <property type="evidence" value="ECO:0000250"/>
    <property type="project" value="UniProtKB"/>
</dbReference>
<dbReference type="GO" id="GO:0005096">
    <property type="term" value="F:GTPase activator activity"/>
    <property type="evidence" value="ECO:0000250"/>
    <property type="project" value="UniProtKB"/>
</dbReference>
<dbReference type="GO" id="GO:0007186">
    <property type="term" value="P:G protein-coupled receptor signaling pathway"/>
    <property type="evidence" value="ECO:0000250"/>
    <property type="project" value="UniProtKB"/>
</dbReference>
<dbReference type="GO" id="GO:0009968">
    <property type="term" value="P:negative regulation of signal transduction"/>
    <property type="evidence" value="ECO:0007669"/>
    <property type="project" value="UniProtKB-KW"/>
</dbReference>
<dbReference type="GO" id="GO:0043547">
    <property type="term" value="P:positive regulation of GTPase activity"/>
    <property type="evidence" value="ECO:0000250"/>
    <property type="project" value="UniProtKB"/>
</dbReference>
<dbReference type="FunFam" id="1.10.167.10:FF:000001">
    <property type="entry name" value="Putative regulator of g-protein signaling 12"/>
    <property type="match status" value="1"/>
</dbReference>
<dbReference type="FunFam" id="1.10.196.10:FF:000001">
    <property type="entry name" value="Regulator of G-protein signaling 8"/>
    <property type="match status" value="1"/>
</dbReference>
<dbReference type="Gene3D" id="1.10.196.10">
    <property type="match status" value="1"/>
</dbReference>
<dbReference type="Gene3D" id="1.10.167.10">
    <property type="entry name" value="Regulator of G-protein Signalling 4, domain 2"/>
    <property type="match status" value="1"/>
</dbReference>
<dbReference type="InterPro" id="IPR016137">
    <property type="entry name" value="RGS"/>
</dbReference>
<dbReference type="InterPro" id="IPR036305">
    <property type="entry name" value="RGS_sf"/>
</dbReference>
<dbReference type="InterPro" id="IPR024066">
    <property type="entry name" value="RGS_subdom1/3"/>
</dbReference>
<dbReference type="InterPro" id="IPR044926">
    <property type="entry name" value="RGS_subdomain_2"/>
</dbReference>
<dbReference type="PANTHER" id="PTHR10845">
    <property type="entry name" value="REGULATOR OF G PROTEIN SIGNALING"/>
    <property type="match status" value="1"/>
</dbReference>
<dbReference type="PANTHER" id="PTHR10845:SF187">
    <property type="entry name" value="REGULATOR OF G-PROTEIN SIGNALING 16"/>
    <property type="match status" value="1"/>
</dbReference>
<dbReference type="Pfam" id="PF00615">
    <property type="entry name" value="RGS"/>
    <property type="match status" value="1"/>
</dbReference>
<dbReference type="PRINTS" id="PR01301">
    <property type="entry name" value="RGSPROTEIN"/>
</dbReference>
<dbReference type="SMART" id="SM00315">
    <property type="entry name" value="RGS"/>
    <property type="match status" value="1"/>
</dbReference>
<dbReference type="SUPFAM" id="SSF48097">
    <property type="entry name" value="Regulator of G-protein signaling, RGS"/>
    <property type="match status" value="1"/>
</dbReference>
<dbReference type="PROSITE" id="PS50132">
    <property type="entry name" value="RGS"/>
    <property type="match status" value="1"/>
</dbReference>
<name>RGS16_BOVIN</name>
<keyword id="KW-0343">GTPase activation</keyword>
<keyword id="KW-0449">Lipoprotein</keyword>
<keyword id="KW-0472">Membrane</keyword>
<keyword id="KW-0564">Palmitate</keyword>
<keyword id="KW-0597">Phosphoprotein</keyword>
<keyword id="KW-1185">Reference proteome</keyword>
<keyword id="KW-0734">Signal transduction inhibitor</keyword>
<evidence type="ECO:0000250" key="1">
    <source>
        <dbReference type="UniProtKB" id="O15492"/>
    </source>
</evidence>
<evidence type="ECO:0000250" key="2">
    <source>
        <dbReference type="UniProtKB" id="P97428"/>
    </source>
</evidence>
<evidence type="ECO:0000255" key="3">
    <source>
        <dbReference type="PROSITE-ProRule" id="PRU00171"/>
    </source>
</evidence>
<evidence type="ECO:0000256" key="4">
    <source>
        <dbReference type="SAM" id="MobiDB-lite"/>
    </source>
</evidence>
<reference key="1">
    <citation type="journal article" date="1998" name="Neuron">
        <title>RGS9, a GTPase accelerator for phototransduction.</title>
        <authorList>
            <person name="He W."/>
            <person name="Cowan C.W."/>
            <person name="Wensel T.G."/>
        </authorList>
    </citation>
    <scope>NUCLEOTIDE SEQUENCE [MRNA]</scope>
</reference>
<reference key="2">
    <citation type="submission" date="2006-09" db="EMBL/GenBank/DDBJ databases">
        <authorList>
            <consortium name="NIH - Mammalian Gene Collection (MGC) project"/>
        </authorList>
    </citation>
    <scope>NUCLEOTIDE SEQUENCE [LARGE SCALE MRNA]</scope>
    <source>
        <strain>Hereford</strain>
        <tissue>Thalamus</tissue>
    </source>
</reference>
<feature type="chain" id="PRO_0000204220" description="Regulator of G-protein signaling 16">
    <location>
        <begin position="1"/>
        <end position="202"/>
    </location>
</feature>
<feature type="domain" description="RGS" evidence="3">
    <location>
        <begin position="65"/>
        <end position="181"/>
    </location>
</feature>
<feature type="region of interest" description="Disordered" evidence="4">
    <location>
        <begin position="183"/>
        <end position="202"/>
    </location>
</feature>
<feature type="modified residue" description="Phosphotyrosine; by EGFR" evidence="1">
    <location>
        <position position="168"/>
    </location>
</feature>
<feature type="modified residue" description="Phosphotyrosine" evidence="1">
    <location>
        <position position="177"/>
    </location>
</feature>
<feature type="lipid moiety-binding region" description="S-palmitoyl cysteine" evidence="2">
    <location>
        <position position="2"/>
    </location>
</feature>
<feature type="lipid moiety-binding region" description="S-palmitoyl cysteine" evidence="2">
    <location>
        <position position="12"/>
    </location>
</feature>
<accession>O46471</accession>
<accession>Q08E37</accession>
<gene>
    <name type="primary">RGS16</name>
</gene>